<gene>
    <name evidence="2" type="primary">Elovl6</name>
    <name type="synonym">Face</name>
    <name type="synonym">Lce</name>
    <name type="synonym">Masr</name>
</gene>
<sequence length="267" mass="31610">MNMSVLTLQEYEFEKQFNENEAIQWMQENWKKSFLFSALYAAFIFGGRHLMNKRAKFELRKPLVLWSLTLAVFSIFGALRTGAYMLYILMTKGLKQSVCDQSFYNGPVSKFWAYAFVLSKAPELGDTIFIILRKQKLIFLHWYHHITVLLYSWYSYKDMVAGGGWFMTMNYGVHAVMYSYYALRAAGFRVSRKFAMFITLSQITQMLMGCVINYLVFNWMQHDNDQCYSHFQNIFWSSLMYLSYLVLFCHFFFEAYIGKVKKATKAE</sequence>
<proteinExistence type="evidence at protein level"/>
<feature type="chain" id="PRO_0000282846" description="Very long chain fatty acid elongase 6">
    <location>
        <begin position="1"/>
        <end position="267"/>
    </location>
</feature>
<feature type="transmembrane region" description="Helical" evidence="2">
    <location>
        <begin position="34"/>
        <end position="51"/>
    </location>
</feature>
<feature type="transmembrane region" description="Helical" evidence="2">
    <location>
        <begin position="70"/>
        <end position="90"/>
    </location>
</feature>
<feature type="transmembrane region" description="Helical" evidence="2">
    <location>
        <begin position="111"/>
        <end position="131"/>
    </location>
</feature>
<feature type="transmembrane region" description="Helical" evidence="2">
    <location>
        <begin position="136"/>
        <end position="156"/>
    </location>
</feature>
<feature type="transmembrane region" description="Helical" evidence="2">
    <location>
        <begin position="159"/>
        <end position="179"/>
    </location>
</feature>
<feature type="transmembrane region" description="Helical" evidence="2">
    <location>
        <begin position="197"/>
        <end position="217"/>
    </location>
</feature>
<feature type="transmembrane region" description="Helical" evidence="2">
    <location>
        <begin position="234"/>
        <end position="254"/>
    </location>
</feature>
<feature type="glycosylation site" description="N-linked (GlcNAc...) asparagine" evidence="2">
    <location>
        <position position="2"/>
    </location>
</feature>
<feature type="sequence conflict" description="In Ref. 4; BAC26252." evidence="7" ref="4">
    <original>H</original>
    <variation>Q</variation>
    <location>
        <position position="144"/>
    </location>
</feature>
<evidence type="ECO:0000250" key="1">
    <source>
        <dbReference type="UniProtKB" id="Q9H5J4"/>
    </source>
</evidence>
<evidence type="ECO:0000255" key="2">
    <source>
        <dbReference type="HAMAP-Rule" id="MF_03206"/>
    </source>
</evidence>
<evidence type="ECO:0000269" key="3">
    <source>
    </source>
</evidence>
<evidence type="ECO:0000269" key="4">
    <source>
    </source>
</evidence>
<evidence type="ECO:0000269" key="5">
    <source>
    </source>
</evidence>
<evidence type="ECO:0000269" key="6">
    <source>
    </source>
</evidence>
<evidence type="ECO:0000305" key="7"/>
<evidence type="ECO:0000305" key="8">
    <source>
    </source>
</evidence>
<organism>
    <name type="scientific">Mus musculus</name>
    <name type="common">Mouse</name>
    <dbReference type="NCBI Taxonomy" id="10090"/>
    <lineage>
        <taxon>Eukaryota</taxon>
        <taxon>Metazoa</taxon>
        <taxon>Chordata</taxon>
        <taxon>Craniata</taxon>
        <taxon>Vertebrata</taxon>
        <taxon>Euteleostomi</taxon>
        <taxon>Mammalia</taxon>
        <taxon>Eutheria</taxon>
        <taxon>Euarchontoglires</taxon>
        <taxon>Glires</taxon>
        <taxon>Rodentia</taxon>
        <taxon>Myomorpha</taxon>
        <taxon>Muroidea</taxon>
        <taxon>Muridae</taxon>
        <taxon>Murinae</taxon>
        <taxon>Mus</taxon>
        <taxon>Mus</taxon>
    </lineage>
</organism>
<name>ELOV6_MOUSE</name>
<dbReference type="EC" id="2.3.1.199" evidence="2 3 6"/>
<dbReference type="EMBL" id="AY053453">
    <property type="protein sequence ID" value="AAL14239.1"/>
    <property type="molecule type" value="mRNA"/>
</dbReference>
<dbReference type="EMBL" id="AB072039">
    <property type="protein sequence ID" value="BAB68544.1"/>
    <property type="molecule type" value="mRNA"/>
</dbReference>
<dbReference type="EMBL" id="AF480860">
    <property type="protein sequence ID" value="AAM13450.1"/>
    <property type="molecule type" value="mRNA"/>
</dbReference>
<dbReference type="EMBL" id="AK029029">
    <property type="protein sequence ID" value="BAC26252.1"/>
    <property type="molecule type" value="mRNA"/>
</dbReference>
<dbReference type="EMBL" id="AK167373">
    <property type="protein sequence ID" value="BAE39469.1"/>
    <property type="molecule type" value="mRNA"/>
</dbReference>
<dbReference type="EMBL" id="BC051041">
    <property type="protein sequence ID" value="AAH51041.1"/>
    <property type="molecule type" value="mRNA"/>
</dbReference>
<dbReference type="EMBL" id="BC098492">
    <property type="protein sequence ID" value="AAH98492.1"/>
    <property type="molecule type" value="mRNA"/>
</dbReference>
<dbReference type="EMBL" id="BC100576">
    <property type="protein sequence ID" value="AAI00577.1"/>
    <property type="molecule type" value="mRNA"/>
</dbReference>
<dbReference type="CCDS" id="CCDS38632.1"/>
<dbReference type="RefSeq" id="NP_569717.1">
    <property type="nucleotide sequence ID" value="NM_130450.2"/>
</dbReference>
<dbReference type="SMR" id="Q920L5"/>
<dbReference type="FunCoup" id="Q920L5">
    <property type="interactions" value="1184"/>
</dbReference>
<dbReference type="STRING" id="10090.ENSMUSP00000071351"/>
<dbReference type="BindingDB" id="Q920L5"/>
<dbReference type="ChEMBL" id="CHEMBL5726"/>
<dbReference type="SwissLipids" id="SLP:000000454"/>
<dbReference type="GlyCosmos" id="Q920L5">
    <property type="glycosylation" value="1 site, No reported glycans"/>
</dbReference>
<dbReference type="GlyGen" id="Q920L5">
    <property type="glycosylation" value="2 sites, 1 N-linked glycan (1 site), 1 O-linked glycan (1 site)"/>
</dbReference>
<dbReference type="PhosphoSitePlus" id="Q920L5"/>
<dbReference type="PaxDb" id="10090-ENSMUSP00000071351"/>
<dbReference type="PeptideAtlas" id="Q920L5"/>
<dbReference type="ProteomicsDB" id="277823"/>
<dbReference type="Pumba" id="Q920L5"/>
<dbReference type="Antibodypedia" id="26395">
    <property type="antibodies" value="196 antibodies from 34 providers"/>
</dbReference>
<dbReference type="DNASU" id="170439"/>
<dbReference type="Ensembl" id="ENSMUST00000071402.7">
    <property type="protein sequence ID" value="ENSMUSP00000071351.3"/>
    <property type="gene ID" value="ENSMUSG00000041220.11"/>
</dbReference>
<dbReference type="Ensembl" id="ENSMUST00000199910.5">
    <property type="protein sequence ID" value="ENSMUSP00000142832.2"/>
    <property type="gene ID" value="ENSMUSG00000041220.11"/>
</dbReference>
<dbReference type="GeneID" id="170439"/>
<dbReference type="KEGG" id="mmu:170439"/>
<dbReference type="UCSC" id="uc008rid.1">
    <property type="organism name" value="mouse"/>
</dbReference>
<dbReference type="AGR" id="MGI:2156528"/>
<dbReference type="CTD" id="79071"/>
<dbReference type="MGI" id="MGI:2156528">
    <property type="gene designation" value="Elovl6"/>
</dbReference>
<dbReference type="VEuPathDB" id="HostDB:ENSMUSG00000041220"/>
<dbReference type="eggNOG" id="KOG3072">
    <property type="taxonomic scope" value="Eukaryota"/>
</dbReference>
<dbReference type="GeneTree" id="ENSGT01050000244965"/>
<dbReference type="InParanoid" id="Q920L5"/>
<dbReference type="OMA" id="PISWVPI"/>
<dbReference type="OrthoDB" id="10259681at2759"/>
<dbReference type="PhylomeDB" id="Q920L5"/>
<dbReference type="TreeFam" id="TF106467"/>
<dbReference type="Reactome" id="R-MMU-75876">
    <property type="pathway name" value="Synthesis of very long-chain fatty acyl-CoAs"/>
</dbReference>
<dbReference type="UniPathway" id="UPA00094"/>
<dbReference type="BioGRID-ORCS" id="170439">
    <property type="hits" value="1 hit in 78 CRISPR screens"/>
</dbReference>
<dbReference type="ChiTaRS" id="Elovl6">
    <property type="organism name" value="mouse"/>
</dbReference>
<dbReference type="PRO" id="PR:Q920L5"/>
<dbReference type="Proteomes" id="UP000000589">
    <property type="component" value="Chromosome 3"/>
</dbReference>
<dbReference type="RNAct" id="Q920L5">
    <property type="molecule type" value="protein"/>
</dbReference>
<dbReference type="Bgee" id="ENSMUSG00000041220">
    <property type="expression patterns" value="Expressed in skin of external ear and 261 other cell types or tissues"/>
</dbReference>
<dbReference type="ExpressionAtlas" id="Q920L5">
    <property type="expression patterns" value="baseline and differential"/>
</dbReference>
<dbReference type="GO" id="GO:0005789">
    <property type="term" value="C:endoplasmic reticulum membrane"/>
    <property type="evidence" value="ECO:0000314"/>
    <property type="project" value="MGI"/>
</dbReference>
<dbReference type="GO" id="GO:0009923">
    <property type="term" value="C:fatty acid elongase complex"/>
    <property type="evidence" value="ECO:0007669"/>
    <property type="project" value="Ensembl"/>
</dbReference>
<dbReference type="GO" id="GO:0016747">
    <property type="term" value="F:acyltransferase activity, transferring groups other than amino-acyl groups"/>
    <property type="evidence" value="ECO:0000314"/>
    <property type="project" value="MGI"/>
</dbReference>
<dbReference type="GO" id="GO:0009922">
    <property type="term" value="F:fatty acid elongase activity"/>
    <property type="evidence" value="ECO:0007669"/>
    <property type="project" value="UniProtKB-UniRule"/>
</dbReference>
<dbReference type="GO" id="GO:0030497">
    <property type="term" value="P:fatty acid elongation"/>
    <property type="evidence" value="ECO:0000314"/>
    <property type="project" value="MGI"/>
</dbReference>
<dbReference type="GO" id="GO:0034625">
    <property type="term" value="P:fatty acid elongation, monounsaturated fatty acid"/>
    <property type="evidence" value="ECO:0007669"/>
    <property type="project" value="UniProtKB-UniRule"/>
</dbReference>
<dbReference type="GO" id="GO:0019367">
    <property type="term" value="P:fatty acid elongation, saturated fatty acid"/>
    <property type="evidence" value="ECO:0000250"/>
    <property type="project" value="UniProtKB"/>
</dbReference>
<dbReference type="GO" id="GO:0042759">
    <property type="term" value="P:long-chain fatty acid biosynthetic process"/>
    <property type="evidence" value="ECO:0000250"/>
    <property type="project" value="UniProtKB"/>
</dbReference>
<dbReference type="GO" id="GO:0035338">
    <property type="term" value="P:long-chain fatty-acyl-CoA biosynthetic process"/>
    <property type="evidence" value="ECO:0007669"/>
    <property type="project" value="UniProtKB-UniRule"/>
</dbReference>
<dbReference type="GO" id="GO:0120162">
    <property type="term" value="P:positive regulation of cold-induced thermogenesis"/>
    <property type="evidence" value="ECO:0000315"/>
    <property type="project" value="YuBioLab"/>
</dbReference>
<dbReference type="GO" id="GO:0006636">
    <property type="term" value="P:unsaturated fatty acid biosynthetic process"/>
    <property type="evidence" value="ECO:0007669"/>
    <property type="project" value="UniProtKB-UniRule"/>
</dbReference>
<dbReference type="GO" id="GO:0042761">
    <property type="term" value="P:very long-chain fatty acid biosynthetic process"/>
    <property type="evidence" value="ECO:0007669"/>
    <property type="project" value="InterPro"/>
</dbReference>
<dbReference type="HAMAP" id="MF_03206">
    <property type="entry name" value="VLCF_elongase_6"/>
    <property type="match status" value="1"/>
</dbReference>
<dbReference type="InterPro" id="IPR030457">
    <property type="entry name" value="ELO_CS"/>
</dbReference>
<dbReference type="InterPro" id="IPR002076">
    <property type="entry name" value="ELO_fam"/>
</dbReference>
<dbReference type="InterPro" id="IPR033675">
    <property type="entry name" value="ELOVL6"/>
</dbReference>
<dbReference type="PANTHER" id="PTHR11157:SF125">
    <property type="entry name" value="ELONGATION OF VERY LONG CHAIN FATTY ACIDS PROTEIN 6"/>
    <property type="match status" value="1"/>
</dbReference>
<dbReference type="PANTHER" id="PTHR11157">
    <property type="entry name" value="FATTY ACID ACYL TRANSFERASE-RELATED"/>
    <property type="match status" value="1"/>
</dbReference>
<dbReference type="Pfam" id="PF01151">
    <property type="entry name" value="ELO"/>
    <property type="match status" value="1"/>
</dbReference>
<dbReference type="PROSITE" id="PS01188">
    <property type="entry name" value="ELO"/>
    <property type="match status" value="1"/>
</dbReference>
<reference key="1">
    <citation type="journal article" date="2001" name="J. Biol. Chem.">
        <title>Identification of a mammalian long chain fatty acyl elongase regulated by sterol regulatory element-binding proteins.</title>
        <authorList>
            <person name="Moon Y.-A."/>
            <person name="Shah N.A."/>
            <person name="Mohapatra S."/>
            <person name="Warrington J.A."/>
            <person name="Horton J.D."/>
        </authorList>
    </citation>
    <scope>NUCLEOTIDE SEQUENCE [MRNA]</scope>
    <scope>FUNCTION</scope>
    <scope>CATALYTIC ACTIVITY</scope>
    <scope>BIOPHYSICOCHEMICAL PROPERTIES</scope>
    <scope>SUBCELLULAR LOCATION</scope>
    <scope>INDUCTION BY SREBF1</scope>
    <scope>TISSUE SPECIFICITY</scope>
</reference>
<reference key="2">
    <citation type="journal article" date="2002" name="J. Lipid Res.">
        <title>Cloning and characterization of a mammalian fatty acyl-CoA elongase as a lipogenic enzyme regulated by SREBPs.</title>
        <authorList>
            <person name="Matsuzaka T."/>
            <person name="Shimano H."/>
            <person name="Yahagi N."/>
            <person name="Yoshikawa T."/>
            <person name="Amemiya-Kudo M."/>
            <person name="Hasty A.H."/>
            <person name="Okazaki H."/>
            <person name="Tamura Y."/>
            <person name="Iizuka Y."/>
            <person name="Ohashi K."/>
            <person name="Osuga J."/>
            <person name="Takahashi A."/>
            <person name="Yato S."/>
            <person name="Sone H."/>
            <person name="Ishibashi S."/>
            <person name="Yamada N."/>
        </authorList>
    </citation>
    <scope>NUCLEOTIDE SEQUENCE [MRNA]</scope>
    <scope>FUNCTION</scope>
    <scope>TISSUE SPECIFICITY</scope>
    <scope>INDUCTION BY SREBF1</scope>
    <source>
        <strain>C57BL/6J</strain>
        <tissue>Liver</tissue>
    </source>
</reference>
<reference key="3">
    <citation type="journal article" date="2002" name="Proc. Natl. Acad. Sci. U.S.A.">
        <title>Deciphering peripheral nerve myelination by using Schwann cell expression profiling.</title>
        <authorList>
            <person name="Nagarajan R."/>
            <person name="Le N."/>
            <person name="Mahoney H."/>
            <person name="Araki T."/>
            <person name="Milbrandt J."/>
        </authorList>
    </citation>
    <scope>NUCLEOTIDE SEQUENCE [MRNA]</scope>
    <scope>TISSUE SPECIFICITY</scope>
    <scope>SUBCELLULAR LOCATION</scope>
</reference>
<reference key="4">
    <citation type="journal article" date="2005" name="Science">
        <title>The transcriptional landscape of the mammalian genome.</title>
        <authorList>
            <person name="Carninci P."/>
            <person name="Kasukawa T."/>
            <person name="Katayama S."/>
            <person name="Gough J."/>
            <person name="Frith M.C."/>
            <person name="Maeda N."/>
            <person name="Oyama R."/>
            <person name="Ravasi T."/>
            <person name="Lenhard B."/>
            <person name="Wells C."/>
            <person name="Kodzius R."/>
            <person name="Shimokawa K."/>
            <person name="Bajic V.B."/>
            <person name="Brenner S.E."/>
            <person name="Batalov S."/>
            <person name="Forrest A.R."/>
            <person name="Zavolan M."/>
            <person name="Davis M.J."/>
            <person name="Wilming L.G."/>
            <person name="Aidinis V."/>
            <person name="Allen J.E."/>
            <person name="Ambesi-Impiombato A."/>
            <person name="Apweiler R."/>
            <person name="Aturaliya R.N."/>
            <person name="Bailey T.L."/>
            <person name="Bansal M."/>
            <person name="Baxter L."/>
            <person name="Beisel K.W."/>
            <person name="Bersano T."/>
            <person name="Bono H."/>
            <person name="Chalk A.M."/>
            <person name="Chiu K.P."/>
            <person name="Choudhary V."/>
            <person name="Christoffels A."/>
            <person name="Clutterbuck D.R."/>
            <person name="Crowe M.L."/>
            <person name="Dalla E."/>
            <person name="Dalrymple B.P."/>
            <person name="de Bono B."/>
            <person name="Della Gatta G."/>
            <person name="di Bernardo D."/>
            <person name="Down T."/>
            <person name="Engstrom P."/>
            <person name="Fagiolini M."/>
            <person name="Faulkner G."/>
            <person name="Fletcher C.F."/>
            <person name="Fukushima T."/>
            <person name="Furuno M."/>
            <person name="Futaki S."/>
            <person name="Gariboldi M."/>
            <person name="Georgii-Hemming P."/>
            <person name="Gingeras T.R."/>
            <person name="Gojobori T."/>
            <person name="Green R.E."/>
            <person name="Gustincich S."/>
            <person name="Harbers M."/>
            <person name="Hayashi Y."/>
            <person name="Hensch T.K."/>
            <person name="Hirokawa N."/>
            <person name="Hill D."/>
            <person name="Huminiecki L."/>
            <person name="Iacono M."/>
            <person name="Ikeo K."/>
            <person name="Iwama A."/>
            <person name="Ishikawa T."/>
            <person name="Jakt M."/>
            <person name="Kanapin A."/>
            <person name="Katoh M."/>
            <person name="Kawasawa Y."/>
            <person name="Kelso J."/>
            <person name="Kitamura H."/>
            <person name="Kitano H."/>
            <person name="Kollias G."/>
            <person name="Krishnan S.P."/>
            <person name="Kruger A."/>
            <person name="Kummerfeld S.K."/>
            <person name="Kurochkin I.V."/>
            <person name="Lareau L.F."/>
            <person name="Lazarevic D."/>
            <person name="Lipovich L."/>
            <person name="Liu J."/>
            <person name="Liuni S."/>
            <person name="McWilliam S."/>
            <person name="Madan Babu M."/>
            <person name="Madera M."/>
            <person name="Marchionni L."/>
            <person name="Matsuda H."/>
            <person name="Matsuzawa S."/>
            <person name="Miki H."/>
            <person name="Mignone F."/>
            <person name="Miyake S."/>
            <person name="Morris K."/>
            <person name="Mottagui-Tabar S."/>
            <person name="Mulder N."/>
            <person name="Nakano N."/>
            <person name="Nakauchi H."/>
            <person name="Ng P."/>
            <person name="Nilsson R."/>
            <person name="Nishiguchi S."/>
            <person name="Nishikawa S."/>
            <person name="Nori F."/>
            <person name="Ohara O."/>
            <person name="Okazaki Y."/>
            <person name="Orlando V."/>
            <person name="Pang K.C."/>
            <person name="Pavan W.J."/>
            <person name="Pavesi G."/>
            <person name="Pesole G."/>
            <person name="Petrovsky N."/>
            <person name="Piazza S."/>
            <person name="Reed J."/>
            <person name="Reid J.F."/>
            <person name="Ring B.Z."/>
            <person name="Ringwald M."/>
            <person name="Rost B."/>
            <person name="Ruan Y."/>
            <person name="Salzberg S.L."/>
            <person name="Sandelin A."/>
            <person name="Schneider C."/>
            <person name="Schoenbach C."/>
            <person name="Sekiguchi K."/>
            <person name="Semple C.A."/>
            <person name="Seno S."/>
            <person name="Sessa L."/>
            <person name="Sheng Y."/>
            <person name="Shibata Y."/>
            <person name="Shimada H."/>
            <person name="Shimada K."/>
            <person name="Silva D."/>
            <person name="Sinclair B."/>
            <person name="Sperling S."/>
            <person name="Stupka E."/>
            <person name="Sugiura K."/>
            <person name="Sultana R."/>
            <person name="Takenaka Y."/>
            <person name="Taki K."/>
            <person name="Tammoja K."/>
            <person name="Tan S.L."/>
            <person name="Tang S."/>
            <person name="Taylor M.S."/>
            <person name="Tegner J."/>
            <person name="Teichmann S.A."/>
            <person name="Ueda H.R."/>
            <person name="van Nimwegen E."/>
            <person name="Verardo R."/>
            <person name="Wei C.L."/>
            <person name="Yagi K."/>
            <person name="Yamanishi H."/>
            <person name="Zabarovsky E."/>
            <person name="Zhu S."/>
            <person name="Zimmer A."/>
            <person name="Hide W."/>
            <person name="Bult C."/>
            <person name="Grimmond S.M."/>
            <person name="Teasdale R.D."/>
            <person name="Liu E.T."/>
            <person name="Brusic V."/>
            <person name="Quackenbush J."/>
            <person name="Wahlestedt C."/>
            <person name="Mattick J.S."/>
            <person name="Hume D.A."/>
            <person name="Kai C."/>
            <person name="Sasaki D."/>
            <person name="Tomaru Y."/>
            <person name="Fukuda S."/>
            <person name="Kanamori-Katayama M."/>
            <person name="Suzuki M."/>
            <person name="Aoki J."/>
            <person name="Arakawa T."/>
            <person name="Iida J."/>
            <person name="Imamura K."/>
            <person name="Itoh M."/>
            <person name="Kato T."/>
            <person name="Kawaji H."/>
            <person name="Kawagashira N."/>
            <person name="Kawashima T."/>
            <person name="Kojima M."/>
            <person name="Kondo S."/>
            <person name="Konno H."/>
            <person name="Nakano K."/>
            <person name="Ninomiya N."/>
            <person name="Nishio T."/>
            <person name="Okada M."/>
            <person name="Plessy C."/>
            <person name="Shibata K."/>
            <person name="Shiraki T."/>
            <person name="Suzuki S."/>
            <person name="Tagami M."/>
            <person name="Waki K."/>
            <person name="Watahiki A."/>
            <person name="Okamura-Oho Y."/>
            <person name="Suzuki H."/>
            <person name="Kawai J."/>
            <person name="Hayashizaki Y."/>
        </authorList>
    </citation>
    <scope>NUCLEOTIDE SEQUENCE [LARGE SCALE MRNA]</scope>
    <source>
        <strain>C57BL/6J</strain>
        <tissue>Amnion</tissue>
        <tissue>Skin</tissue>
    </source>
</reference>
<reference key="5">
    <citation type="journal article" date="2004" name="Genome Res.">
        <title>The status, quality, and expansion of the NIH full-length cDNA project: the Mammalian Gene Collection (MGC).</title>
        <authorList>
            <consortium name="The MGC Project Team"/>
        </authorList>
    </citation>
    <scope>NUCLEOTIDE SEQUENCE [LARGE SCALE MRNA]</scope>
    <source>
        <strain>CD-1</strain>
        <strain>Czech II</strain>
        <tissue>Mammary tumor</tissue>
        <tissue>Neural stem cell</tissue>
    </source>
</reference>
<reference key="6">
    <citation type="journal article" date="2007" name="Nat. Med.">
        <title>Crucial role of a long-chain fatty acid elongase, Elovl6, in obesity-induced insulin resistance.</title>
        <authorList>
            <person name="Matsuzaka T."/>
            <person name="Shimano H."/>
            <person name="Yahagi N."/>
            <person name="Kato T."/>
            <person name="Atsumi A."/>
            <person name="Yamamoto T."/>
            <person name="Inoue N."/>
            <person name="Ishikawa M."/>
            <person name="Okada S."/>
            <person name="Ishigaki N."/>
            <person name="Iwasaki H."/>
            <person name="Iwasaki Y."/>
            <person name="Karasawa T."/>
            <person name="Kumadaki S."/>
            <person name="Matsui T."/>
            <person name="Sekiya M."/>
            <person name="Ohashi K."/>
            <person name="Hasty A.H."/>
            <person name="Nakagawa Y."/>
            <person name="Takahashi A."/>
            <person name="Suzuki H."/>
            <person name="Yatoh S."/>
            <person name="Sone H."/>
            <person name="Toyoshima H."/>
            <person name="Osuga J."/>
            <person name="Yamada N."/>
        </authorList>
    </citation>
    <scope>FUNCTION</scope>
    <scope>CATALYTIC ACTIVITY</scope>
    <scope>PATHWAY</scope>
    <scope>DISRUPTION PHENOTYPE</scope>
</reference>
<reference key="7">
    <citation type="journal article" date="2010" name="Cell">
        <title>A tissue-specific atlas of mouse protein phosphorylation and expression.</title>
        <authorList>
            <person name="Huttlin E.L."/>
            <person name="Jedrychowski M.P."/>
            <person name="Elias J.E."/>
            <person name="Goswami T."/>
            <person name="Rad R."/>
            <person name="Beausoleil S.A."/>
            <person name="Villen J."/>
            <person name="Haas W."/>
            <person name="Sowa M.E."/>
            <person name="Gygi S.P."/>
        </authorList>
    </citation>
    <scope>IDENTIFICATION BY MASS SPECTROMETRY [LARGE SCALE ANALYSIS]</scope>
    <source>
        <tissue>Brown adipose tissue</tissue>
    </source>
</reference>
<comment type="function">
    <text evidence="2 3 4 6">Catalyzes the first and rate-limiting reaction of the four reactions that constitute the long-chain fatty acids elongation cycle. This endoplasmic reticulum-bound enzymatic process allows the addition of 2 carbons to the chain of long- and very long-chain fatty acids (VLCFAs) per cycle. Condensing enzyme that elongates fatty acids with 12, 14 and 16 carbons with higher activity toward C16:0 acyl-CoAs. Catalyzes the synthesis of unsaturated C16 long chain fatty acids and, to a lesser extent, C18:0 and those with low desaturation degree. May participate in the production of saturated and monounsaturated VLCFAs of different chain lengths that are involved in multiple biological processes as precursors of membrane lipids and lipid mediators.</text>
</comment>
<comment type="catalytic activity">
    <reaction evidence="2 3 6">
        <text>a very-long-chain acyl-CoA + malonyl-CoA + H(+) = a very-long-chain 3-oxoacyl-CoA + CO2 + CoA</text>
        <dbReference type="Rhea" id="RHEA:32727"/>
        <dbReference type="ChEBI" id="CHEBI:15378"/>
        <dbReference type="ChEBI" id="CHEBI:16526"/>
        <dbReference type="ChEBI" id="CHEBI:57287"/>
        <dbReference type="ChEBI" id="CHEBI:57384"/>
        <dbReference type="ChEBI" id="CHEBI:90725"/>
        <dbReference type="ChEBI" id="CHEBI:90736"/>
        <dbReference type="EC" id="2.3.1.199"/>
    </reaction>
    <physiologicalReaction direction="left-to-right" evidence="6">
        <dbReference type="Rhea" id="RHEA:32728"/>
    </physiologicalReaction>
</comment>
<comment type="catalytic activity">
    <reaction evidence="3 6">
        <text>hexadecanoyl-CoA + malonyl-CoA + H(+) = 3-oxooctadecanoyl-CoA + CO2 + CoA</text>
        <dbReference type="Rhea" id="RHEA:35315"/>
        <dbReference type="ChEBI" id="CHEBI:15378"/>
        <dbReference type="ChEBI" id="CHEBI:16526"/>
        <dbReference type="ChEBI" id="CHEBI:57287"/>
        <dbReference type="ChEBI" id="CHEBI:57379"/>
        <dbReference type="ChEBI" id="CHEBI:57384"/>
        <dbReference type="ChEBI" id="CHEBI:71407"/>
    </reaction>
    <physiologicalReaction direction="left-to-right" evidence="6">
        <dbReference type="Rhea" id="RHEA:35316"/>
    </physiologicalReaction>
</comment>
<comment type="catalytic activity">
    <reaction evidence="6">
        <text>(9Z)-hexadecenoyl-CoA + malonyl-CoA + H(+) = 3-oxo-(11Z)-octadecenoyl-CoA + CO2 + CoA</text>
        <dbReference type="Rhea" id="RHEA:39675"/>
        <dbReference type="ChEBI" id="CHEBI:15378"/>
        <dbReference type="ChEBI" id="CHEBI:16526"/>
        <dbReference type="ChEBI" id="CHEBI:57287"/>
        <dbReference type="ChEBI" id="CHEBI:57384"/>
        <dbReference type="ChEBI" id="CHEBI:61540"/>
        <dbReference type="ChEBI" id="CHEBI:76555"/>
    </reaction>
    <physiologicalReaction direction="left-to-right" evidence="6">
        <dbReference type="Rhea" id="RHEA:39676"/>
    </physiologicalReaction>
</comment>
<comment type="catalytic activity">
    <reaction evidence="3">
        <text>dodecanoyl-CoA + malonyl-CoA + H(+) = 3-oxotetradecanoyl-CoA + CO2 + CoA</text>
        <dbReference type="Rhea" id="RHEA:60140"/>
        <dbReference type="ChEBI" id="CHEBI:15378"/>
        <dbReference type="ChEBI" id="CHEBI:16526"/>
        <dbReference type="ChEBI" id="CHEBI:57287"/>
        <dbReference type="ChEBI" id="CHEBI:57375"/>
        <dbReference type="ChEBI" id="CHEBI:57384"/>
        <dbReference type="ChEBI" id="CHEBI:62543"/>
    </reaction>
    <physiologicalReaction direction="left-to-right" evidence="8">
        <dbReference type="Rhea" id="RHEA:60141"/>
    </physiologicalReaction>
</comment>
<comment type="catalytic activity">
    <reaction evidence="1">
        <text>tetradecanoyl-CoA + malonyl-CoA + H(+) = 3-oxohexadecanoyl-CoA + CO2 + CoA</text>
        <dbReference type="Rhea" id="RHEA:39167"/>
        <dbReference type="ChEBI" id="CHEBI:15378"/>
        <dbReference type="ChEBI" id="CHEBI:16526"/>
        <dbReference type="ChEBI" id="CHEBI:57287"/>
        <dbReference type="ChEBI" id="CHEBI:57349"/>
        <dbReference type="ChEBI" id="CHEBI:57384"/>
        <dbReference type="ChEBI" id="CHEBI:57385"/>
    </reaction>
    <physiologicalReaction direction="left-to-right" evidence="1">
        <dbReference type="Rhea" id="RHEA:39168"/>
    </physiologicalReaction>
</comment>
<comment type="catalytic activity">
    <reaction evidence="1">
        <text>(9Z)-octadecenoyl-CoA + malonyl-CoA + H(+) = 3-oxo-(11Z)-eicosenoyl-CoA + CO2 + CoA</text>
        <dbReference type="Rhea" id="RHEA:36511"/>
        <dbReference type="ChEBI" id="CHEBI:15378"/>
        <dbReference type="ChEBI" id="CHEBI:16526"/>
        <dbReference type="ChEBI" id="CHEBI:57287"/>
        <dbReference type="ChEBI" id="CHEBI:57384"/>
        <dbReference type="ChEBI" id="CHEBI:57387"/>
        <dbReference type="ChEBI" id="CHEBI:74011"/>
    </reaction>
    <physiologicalReaction direction="left-to-right" evidence="1">
        <dbReference type="Rhea" id="RHEA:36512"/>
    </physiologicalReaction>
</comment>
<comment type="catalytic activity">
    <reaction evidence="1">
        <text>(9Z,12Z)-octadecadienoyl-CoA + malonyl-CoA + H(+) = (11Z,14Z)-3-oxoicosa-11,14-dienoyl-CoA + CO2 + CoA</text>
        <dbReference type="Rhea" id="RHEA:36503"/>
        <dbReference type="ChEBI" id="CHEBI:15378"/>
        <dbReference type="ChEBI" id="CHEBI:16526"/>
        <dbReference type="ChEBI" id="CHEBI:57287"/>
        <dbReference type="ChEBI" id="CHEBI:57383"/>
        <dbReference type="ChEBI" id="CHEBI:57384"/>
        <dbReference type="ChEBI" id="CHEBI:74012"/>
    </reaction>
    <physiologicalReaction direction="left-to-right" evidence="1">
        <dbReference type="Rhea" id="RHEA:36504"/>
    </physiologicalReaction>
</comment>
<comment type="catalytic activity">
    <reaction evidence="1">
        <text>(9Z,12Z,15Z)-octadecatrienoyl-CoA + malonyl-CoA + H(+) = (11Z,14Z,17Z)-3-oxoeicosatrienoyl-CoA + CO2 + CoA</text>
        <dbReference type="Rhea" id="RHEA:36523"/>
        <dbReference type="ChEBI" id="CHEBI:15378"/>
        <dbReference type="ChEBI" id="CHEBI:16526"/>
        <dbReference type="ChEBI" id="CHEBI:57287"/>
        <dbReference type="ChEBI" id="CHEBI:57384"/>
        <dbReference type="ChEBI" id="CHEBI:74034"/>
        <dbReference type="ChEBI" id="CHEBI:74054"/>
    </reaction>
    <physiologicalReaction direction="left-to-right" evidence="1">
        <dbReference type="Rhea" id="RHEA:36524"/>
    </physiologicalReaction>
</comment>
<comment type="activity regulation">
    <text evidence="1">The reaction is stimulated by the presence of HSD17B12, the enzyme catalyzing the second step of the elongation cycle.</text>
</comment>
<comment type="biophysicochemical properties">
    <phDependence>
        <text evidence="3">Optimum pH is 6.5 at 37 degrees Celsius with hexadecanoyl-CoA as substrate.</text>
    </phDependence>
</comment>
<comment type="pathway">
    <text evidence="2 6">Lipid metabolism; fatty acid biosynthesis.</text>
</comment>
<comment type="subcellular location">
    <subcellularLocation>
        <location evidence="2 3 5">Endoplasmic reticulum membrane</location>
        <topology evidence="2">Multi-pass membrane protein</topology>
    </subcellularLocation>
</comment>
<comment type="tissue specificity">
    <text evidence="3 4 5">Highly expressed in adrenal gland, liver, white adipose tissue (WAT), adult and fetal brain, cerebellum, spinal cord, testis, skin and peripheral nerve; where lipogenesis and steroidogenesis are active. Weakly expressed in kidney, heart, skeletal muscle, lung, and spleen.</text>
</comment>
<comment type="induction">
    <text evidence="3 4">By SREBF1.</text>
</comment>
<comment type="PTM">
    <text evidence="2">N-Glycosylated.</text>
</comment>
<comment type="disruption phenotype">
    <text evidence="6">Homozygous knockout mice lacking Elovl6 are partially viable and surviving animals are fertile. Mutant mice appear grossly normal and slightly but significantly leaner than wild-type littermates. Hepatic concentrations of stearate (C18:0) and oleate (C18:1n-9) are lowered, whereas those of palmitate (C16:0) and palmitoleate (C16:1n7) are increased. Elovl6 deletion abrogates the development of diet-induced insulin resistance.</text>
</comment>
<comment type="similarity">
    <text evidence="2">Belongs to the ELO family. ELOVL6 subfamily.</text>
</comment>
<protein>
    <recommendedName>
        <fullName evidence="2">Very long chain fatty acid elongase 6</fullName>
        <ecNumber evidence="2 3 6">2.3.1.199</ecNumber>
    </recommendedName>
    <alternativeName>
        <fullName evidence="2">3-keto acyl-CoA synthase Elovl6</fullName>
    </alternativeName>
    <alternativeName>
        <fullName evidence="2">ELOVL fatty acid elongase 6</fullName>
        <shortName evidence="2">ELOVL FA elongase 6</shortName>
    </alternativeName>
    <alternativeName>
        <fullName evidence="2">Elongation of very long chain fatty acids protein 6</fullName>
    </alternativeName>
    <alternativeName>
        <fullName>Fatty acyl-CoA elongase</fullName>
    </alternativeName>
    <alternativeName>
        <fullName>Long chain fatty acid elongase</fullName>
    </alternativeName>
    <alternativeName>
        <fullName>Myelin-associated SUR4 protein</fullName>
    </alternativeName>
    <alternativeName>
        <fullName evidence="2">Very long chain 3-ketoacyl-CoA synthase 6</fullName>
    </alternativeName>
    <alternativeName>
        <fullName evidence="2">Very long chain 3-oxoacyl-CoA synthase 6</fullName>
    </alternativeName>
</protein>
<accession>Q920L5</accession>
<accession>Q8CE45</accession>
<keyword id="KW-0256">Endoplasmic reticulum</keyword>
<keyword id="KW-0275">Fatty acid biosynthesis</keyword>
<keyword id="KW-0276">Fatty acid metabolism</keyword>
<keyword id="KW-0325">Glycoprotein</keyword>
<keyword id="KW-0444">Lipid biosynthesis</keyword>
<keyword id="KW-0443">Lipid metabolism</keyword>
<keyword id="KW-0472">Membrane</keyword>
<keyword id="KW-1185">Reference proteome</keyword>
<keyword id="KW-0808">Transferase</keyword>
<keyword id="KW-0812">Transmembrane</keyword>
<keyword id="KW-1133">Transmembrane helix</keyword>